<organism>
    <name type="scientific">Rattus norvegicus</name>
    <name type="common">Rat</name>
    <dbReference type="NCBI Taxonomy" id="10116"/>
    <lineage>
        <taxon>Eukaryota</taxon>
        <taxon>Metazoa</taxon>
        <taxon>Chordata</taxon>
        <taxon>Craniata</taxon>
        <taxon>Vertebrata</taxon>
        <taxon>Euteleostomi</taxon>
        <taxon>Mammalia</taxon>
        <taxon>Eutheria</taxon>
        <taxon>Euarchontoglires</taxon>
        <taxon>Glires</taxon>
        <taxon>Rodentia</taxon>
        <taxon>Myomorpha</taxon>
        <taxon>Muroidea</taxon>
        <taxon>Muridae</taxon>
        <taxon>Murinae</taxon>
        <taxon>Rattus</taxon>
    </lineage>
</organism>
<accession>Q923X9</accession>
<protein>
    <recommendedName>
        <fullName>Trace amine-associated receptor 8a</fullName>
        <shortName>TaR-8a</shortName>
        <shortName>Trace amine receptor 8a</shortName>
    </recommendedName>
    <alternativeName>
        <fullName evidence="6">Trace amine receptor 11</fullName>
        <shortName evidence="6">TaR-11</shortName>
    </alternativeName>
</protein>
<name>TAA8A_RAT</name>
<sequence>MTSNFSQAPLQLCYENVNASCIKTPYSPGLRVLLYMVFGFGAVLAVCGNLLVVISVLHFKQLHSPANFLIASLASADFLVGISVMPFSMVRSIESCWYFGDTFCSLHSCCDAAFCYSSLFHLCFISVDRYIAVTDPLVYPTKFTVSVSGICISISWILPLVYSSAVFYTGISATGIENLVSALNCVGGCQIVVNQDWVLIDFLLFLIPTLVMIILYSKIFLVAKQQAVKIETSISGSKGESSLESHKARVAKRERKAAKTLGVTVVAFMVSWLPYTIDTLIDAFMGFITPAYVYEICCWSAYYNSAMNPLIYAFFYPWFRKAIKLILSGEILKSHSSTMSLFSE</sequence>
<keyword id="KW-1003">Cell membrane</keyword>
<keyword id="KW-1015">Disulfide bond</keyword>
<keyword id="KW-0297">G-protein coupled receptor</keyword>
<keyword id="KW-0325">Glycoprotein</keyword>
<keyword id="KW-0472">Membrane</keyword>
<keyword id="KW-0675">Receptor</keyword>
<keyword id="KW-1185">Reference proteome</keyword>
<keyword id="KW-0807">Transducer</keyword>
<keyword id="KW-0812">Transmembrane</keyword>
<keyword id="KW-1133">Transmembrane helix</keyword>
<proteinExistence type="inferred from homology"/>
<gene>
    <name evidence="8" type="primary">Taar8a</name>
    <name evidence="6" type="synonym">Ta11</name>
    <name evidence="6" type="synonym">Tar11</name>
    <name evidence="6" type="synonym">Trar11</name>
</gene>
<comment type="function">
    <text evidence="3">Olfactory receptor activated by trace amines. Trace amine compounds are enriched in animal body fluids and act on trace amine-associated receptors (TAARs) to elicit both intraspecific and interspecific innate behaviors. Ligand-binding causes a conformation change that triggers signaling via G(s)-class of G alpha proteins (GNAL or GNAS).</text>
</comment>
<comment type="subcellular location">
    <subcellularLocation>
        <location evidence="2">Cell membrane</location>
        <topology evidence="4">Multi-pass membrane protein</topology>
    </subcellularLocation>
</comment>
<comment type="similarity">
    <text evidence="5">Belongs to the G-protein coupled receptor 1 family.</text>
</comment>
<comment type="sequence caution" evidence="7">
    <conflict type="erroneous initiation">
        <sequence resource="EMBL-CDS" id="AAK71250"/>
    </conflict>
</comment>
<dbReference type="EMBL" id="AF380199">
    <property type="protein sequence ID" value="AAK71250.1"/>
    <property type="status" value="ALT_INIT"/>
    <property type="molecule type" value="Genomic_DNA"/>
</dbReference>
<dbReference type="RefSeq" id="NP_783189.1">
    <property type="nucleotide sequence ID" value="NM_175599.1"/>
</dbReference>
<dbReference type="RefSeq" id="XP_017445356.1">
    <property type="nucleotide sequence ID" value="XM_017589867.1"/>
</dbReference>
<dbReference type="RefSeq" id="XP_017445965.1">
    <property type="nucleotide sequence ID" value="XM_017590476.1"/>
</dbReference>
<dbReference type="SMR" id="Q923X9"/>
<dbReference type="FunCoup" id="Q923X9">
    <property type="interactions" value="32"/>
</dbReference>
<dbReference type="STRING" id="10116.ENSRNOP00000040109"/>
<dbReference type="GlyCosmos" id="Q923X9">
    <property type="glycosylation" value="2 sites, No reported glycans"/>
</dbReference>
<dbReference type="GlyGen" id="Q923X9">
    <property type="glycosylation" value="2 sites"/>
</dbReference>
<dbReference type="PaxDb" id="10116-ENSRNOP00000040109"/>
<dbReference type="GeneID" id="319104"/>
<dbReference type="KEGG" id="rno:319104"/>
<dbReference type="AGR" id="RGD:631391"/>
<dbReference type="CTD" id="215859"/>
<dbReference type="RGD" id="631391">
    <property type="gene designation" value="Taar8a"/>
</dbReference>
<dbReference type="eggNOG" id="KOG3656">
    <property type="taxonomic scope" value="Eukaryota"/>
</dbReference>
<dbReference type="InParanoid" id="Q923X9"/>
<dbReference type="OrthoDB" id="21721at9989"/>
<dbReference type="PhylomeDB" id="Q923X9"/>
<dbReference type="TreeFam" id="TF343107"/>
<dbReference type="Reactome" id="R-RNO-375280">
    <property type="pathway name" value="Amine ligand-binding receptors"/>
</dbReference>
<dbReference type="PRO" id="PR:Q923X9"/>
<dbReference type="Proteomes" id="UP000002494">
    <property type="component" value="Unplaced"/>
</dbReference>
<dbReference type="GO" id="GO:0005886">
    <property type="term" value="C:plasma membrane"/>
    <property type="evidence" value="ECO:0000318"/>
    <property type="project" value="GO_Central"/>
</dbReference>
<dbReference type="GO" id="GO:0001594">
    <property type="term" value="F:trace-amine receptor activity"/>
    <property type="evidence" value="ECO:0000318"/>
    <property type="project" value="GO_Central"/>
</dbReference>
<dbReference type="GO" id="GO:0007186">
    <property type="term" value="P:G protein-coupled receptor signaling pathway"/>
    <property type="evidence" value="ECO:0000318"/>
    <property type="project" value="GO_Central"/>
</dbReference>
<dbReference type="FunFam" id="1.20.1070.10:FF:000030">
    <property type="entry name" value="trace amine-associated receptor 1"/>
    <property type="match status" value="1"/>
</dbReference>
<dbReference type="Gene3D" id="1.20.1070.10">
    <property type="entry name" value="Rhodopsin 7-helix transmembrane proteins"/>
    <property type="match status" value="1"/>
</dbReference>
<dbReference type="InterPro" id="IPR000276">
    <property type="entry name" value="GPCR_Rhodpsn"/>
</dbReference>
<dbReference type="InterPro" id="IPR017452">
    <property type="entry name" value="GPCR_Rhodpsn_7TM"/>
</dbReference>
<dbReference type="InterPro" id="IPR050569">
    <property type="entry name" value="TAAR"/>
</dbReference>
<dbReference type="InterPro" id="IPR009132">
    <property type="entry name" value="TAAR_fam"/>
</dbReference>
<dbReference type="PANTHER" id="PTHR24249">
    <property type="entry name" value="HISTAMINE RECEPTOR-RELATED G-PROTEIN COUPLED RECEPTOR"/>
    <property type="match status" value="1"/>
</dbReference>
<dbReference type="PANTHER" id="PTHR24249:SF405">
    <property type="entry name" value="TRACE AMINE-ASSOCIATED RECEPTOR 8"/>
    <property type="match status" value="1"/>
</dbReference>
<dbReference type="Pfam" id="PF00001">
    <property type="entry name" value="7tm_1"/>
    <property type="match status" value="1"/>
</dbReference>
<dbReference type="PRINTS" id="PR00237">
    <property type="entry name" value="GPCRRHODOPSN"/>
</dbReference>
<dbReference type="PRINTS" id="PR01830">
    <property type="entry name" value="TRACEAMINER"/>
</dbReference>
<dbReference type="SMART" id="SM01381">
    <property type="entry name" value="7TM_GPCR_Srsx"/>
    <property type="match status" value="1"/>
</dbReference>
<dbReference type="SUPFAM" id="SSF81321">
    <property type="entry name" value="Family A G protein-coupled receptor-like"/>
    <property type="match status" value="1"/>
</dbReference>
<dbReference type="PROSITE" id="PS00237">
    <property type="entry name" value="G_PROTEIN_RECEP_F1_1"/>
    <property type="match status" value="1"/>
</dbReference>
<dbReference type="PROSITE" id="PS50262">
    <property type="entry name" value="G_PROTEIN_RECEP_F1_2"/>
    <property type="match status" value="1"/>
</dbReference>
<reference key="1">
    <citation type="journal article" date="2001" name="Proc. Natl. Acad. Sci. U.S.A.">
        <title>Trace amines: identification of a family of mammalian G protein-coupled receptors.</title>
        <authorList>
            <person name="Borowsky B."/>
            <person name="Adham N."/>
            <person name="Jones K.A."/>
            <person name="Raddatz R."/>
            <person name="Artymyshyn R."/>
            <person name="Ogozalek K.L."/>
            <person name="Durkin M.M."/>
            <person name="Lakhlani P.P."/>
            <person name="Bonini J.A."/>
            <person name="Pathirana S."/>
            <person name="Boyle N."/>
            <person name="Pu X."/>
            <person name="Kouranova E."/>
            <person name="Lichtblau H."/>
            <person name="Ochoa F.Y."/>
            <person name="Branchek T.A."/>
            <person name="Gerald C."/>
        </authorList>
    </citation>
    <scope>NUCLEOTIDE SEQUENCE [GENOMIC DNA]</scope>
    <source>
        <strain>Sprague-Dawley</strain>
    </source>
</reference>
<feature type="chain" id="PRO_0000070176" description="Trace amine-associated receptor 8a">
    <location>
        <begin position="1"/>
        <end position="344"/>
    </location>
</feature>
<feature type="topological domain" description="Extracellular" evidence="4">
    <location>
        <begin position="1"/>
        <end position="33"/>
    </location>
</feature>
<feature type="transmembrane region" description="Helical; Name=1" evidence="4">
    <location>
        <begin position="34"/>
        <end position="54"/>
    </location>
</feature>
<feature type="topological domain" description="Cytoplasmic" evidence="4">
    <location>
        <begin position="55"/>
        <end position="67"/>
    </location>
</feature>
<feature type="transmembrane region" description="Helical; Name=2" evidence="4">
    <location>
        <begin position="68"/>
        <end position="88"/>
    </location>
</feature>
<feature type="topological domain" description="Extracellular" evidence="4">
    <location>
        <begin position="89"/>
        <end position="102"/>
    </location>
</feature>
<feature type="transmembrane region" description="Helical; Name=3" evidence="4">
    <location>
        <begin position="103"/>
        <end position="127"/>
    </location>
</feature>
<feature type="topological domain" description="Cytoplasmic" evidence="4">
    <location>
        <begin position="128"/>
        <end position="146"/>
    </location>
</feature>
<feature type="transmembrane region" description="Helical; Name=4" evidence="4">
    <location>
        <begin position="147"/>
        <end position="167"/>
    </location>
</feature>
<feature type="topological domain" description="Extracellular" evidence="4">
    <location>
        <begin position="168"/>
        <end position="196"/>
    </location>
</feature>
<feature type="transmembrane region" description="Helical; Name=5" evidence="4">
    <location>
        <begin position="197"/>
        <end position="217"/>
    </location>
</feature>
<feature type="topological domain" description="Cytoplasmic" evidence="4">
    <location>
        <begin position="218"/>
        <end position="260"/>
    </location>
</feature>
<feature type="transmembrane region" description="Helical; Name=6" evidence="4">
    <location>
        <begin position="261"/>
        <end position="281"/>
    </location>
</feature>
<feature type="topological domain" description="Extracellular" evidence="4">
    <location>
        <begin position="282"/>
        <end position="291"/>
    </location>
</feature>
<feature type="transmembrane region" description="Helical; Name=7" evidence="4">
    <location>
        <begin position="292"/>
        <end position="314"/>
    </location>
</feature>
<feature type="topological domain" description="Cytoplasmic" evidence="4">
    <location>
        <begin position="315"/>
        <end position="344"/>
    </location>
</feature>
<feature type="glycosylation site" description="N-linked (GlcNAc...) asparagine" evidence="4">
    <location>
        <position position="4"/>
    </location>
</feature>
<feature type="glycosylation site" description="N-linked (GlcNAc...) asparagine" evidence="4">
    <location>
        <position position="18"/>
    </location>
</feature>
<feature type="disulfide bond" evidence="1">
    <location>
        <begin position="21"/>
        <end position="185"/>
    </location>
</feature>
<feature type="disulfide bond" evidence="5">
    <location>
        <begin position="96"/>
        <end position="189"/>
    </location>
</feature>
<evidence type="ECO:0000250" key="1">
    <source>
        <dbReference type="UniProtKB" id="Q5QD04"/>
    </source>
</evidence>
<evidence type="ECO:0000250" key="2">
    <source>
        <dbReference type="UniProtKB" id="Q5QD06"/>
    </source>
</evidence>
<evidence type="ECO:0000250" key="3">
    <source>
        <dbReference type="UniProtKB" id="Q923Y0"/>
    </source>
</evidence>
<evidence type="ECO:0000255" key="4"/>
<evidence type="ECO:0000255" key="5">
    <source>
        <dbReference type="PROSITE-ProRule" id="PRU00521"/>
    </source>
</evidence>
<evidence type="ECO:0000303" key="6">
    <source>
    </source>
</evidence>
<evidence type="ECO:0000305" key="7"/>
<evidence type="ECO:0000312" key="8">
    <source>
        <dbReference type="RGD" id="631391"/>
    </source>
</evidence>